<organism>
    <name type="scientific">Yersinia pestis bv. Antiqua (strain Angola)</name>
    <dbReference type="NCBI Taxonomy" id="349746"/>
    <lineage>
        <taxon>Bacteria</taxon>
        <taxon>Pseudomonadati</taxon>
        <taxon>Pseudomonadota</taxon>
        <taxon>Gammaproteobacteria</taxon>
        <taxon>Enterobacterales</taxon>
        <taxon>Yersiniaceae</taxon>
        <taxon>Yersinia</taxon>
    </lineage>
</organism>
<protein>
    <recommendedName>
        <fullName evidence="1">Large ribosomal subunit protein uL24</fullName>
    </recommendedName>
    <alternativeName>
        <fullName evidence="2">50S ribosomal protein L24</fullName>
    </alternativeName>
</protein>
<name>RL24_YERPG</name>
<sequence>MAAKIRRDDEVIVLTGKDKGKRGKVKNVLSSGKVIVEGINLVKKHQKPVPALNQPGGIVEKEAAIQVSNLALFNATTGKADRVGFRFEDGKKVRFFKSTSETIK</sequence>
<reference key="1">
    <citation type="journal article" date="2010" name="J. Bacteriol.">
        <title>Genome sequence of the deep-rooted Yersinia pestis strain Angola reveals new insights into the evolution and pangenome of the plague bacterium.</title>
        <authorList>
            <person name="Eppinger M."/>
            <person name="Worsham P.L."/>
            <person name="Nikolich M.P."/>
            <person name="Riley D.R."/>
            <person name="Sebastian Y."/>
            <person name="Mou S."/>
            <person name="Achtman M."/>
            <person name="Lindler L.E."/>
            <person name="Ravel J."/>
        </authorList>
    </citation>
    <scope>NUCLEOTIDE SEQUENCE [LARGE SCALE GENOMIC DNA]</scope>
    <source>
        <strain>Angola</strain>
    </source>
</reference>
<gene>
    <name evidence="1" type="primary">rplX</name>
    <name type="ordered locus">YpAngola_A0594</name>
</gene>
<dbReference type="EMBL" id="CP000901">
    <property type="protein sequence ID" value="ABX87820.1"/>
    <property type="molecule type" value="Genomic_DNA"/>
</dbReference>
<dbReference type="RefSeq" id="WP_002213327.1">
    <property type="nucleotide sequence ID" value="NZ_CP009935.1"/>
</dbReference>
<dbReference type="SMR" id="A9R906"/>
<dbReference type="GeneID" id="57974384"/>
<dbReference type="KEGG" id="ypg:YpAngola_A0594"/>
<dbReference type="PATRIC" id="fig|349746.12.peg.1544"/>
<dbReference type="GO" id="GO:1990904">
    <property type="term" value="C:ribonucleoprotein complex"/>
    <property type="evidence" value="ECO:0007669"/>
    <property type="project" value="UniProtKB-KW"/>
</dbReference>
<dbReference type="GO" id="GO:0005840">
    <property type="term" value="C:ribosome"/>
    <property type="evidence" value="ECO:0007669"/>
    <property type="project" value="UniProtKB-KW"/>
</dbReference>
<dbReference type="GO" id="GO:0019843">
    <property type="term" value="F:rRNA binding"/>
    <property type="evidence" value="ECO:0007669"/>
    <property type="project" value="UniProtKB-UniRule"/>
</dbReference>
<dbReference type="GO" id="GO:0003735">
    <property type="term" value="F:structural constituent of ribosome"/>
    <property type="evidence" value="ECO:0007669"/>
    <property type="project" value="InterPro"/>
</dbReference>
<dbReference type="GO" id="GO:0006412">
    <property type="term" value="P:translation"/>
    <property type="evidence" value="ECO:0007669"/>
    <property type="project" value="UniProtKB-UniRule"/>
</dbReference>
<dbReference type="CDD" id="cd06089">
    <property type="entry name" value="KOW_RPL26"/>
    <property type="match status" value="1"/>
</dbReference>
<dbReference type="FunFam" id="2.30.30.30:FF:000004">
    <property type="entry name" value="50S ribosomal protein L24"/>
    <property type="match status" value="1"/>
</dbReference>
<dbReference type="Gene3D" id="2.30.30.30">
    <property type="match status" value="1"/>
</dbReference>
<dbReference type="HAMAP" id="MF_01326_B">
    <property type="entry name" value="Ribosomal_uL24_B"/>
    <property type="match status" value="1"/>
</dbReference>
<dbReference type="InterPro" id="IPR005824">
    <property type="entry name" value="KOW"/>
</dbReference>
<dbReference type="InterPro" id="IPR014722">
    <property type="entry name" value="Rib_uL2_dom2"/>
</dbReference>
<dbReference type="InterPro" id="IPR003256">
    <property type="entry name" value="Ribosomal_uL24"/>
</dbReference>
<dbReference type="InterPro" id="IPR005825">
    <property type="entry name" value="Ribosomal_uL24_CS"/>
</dbReference>
<dbReference type="InterPro" id="IPR041988">
    <property type="entry name" value="Ribosomal_uL24_KOW"/>
</dbReference>
<dbReference type="InterPro" id="IPR008991">
    <property type="entry name" value="Translation_prot_SH3-like_sf"/>
</dbReference>
<dbReference type="NCBIfam" id="TIGR01079">
    <property type="entry name" value="rplX_bact"/>
    <property type="match status" value="1"/>
</dbReference>
<dbReference type="PANTHER" id="PTHR12903">
    <property type="entry name" value="MITOCHONDRIAL RIBOSOMAL PROTEIN L24"/>
    <property type="match status" value="1"/>
</dbReference>
<dbReference type="Pfam" id="PF00467">
    <property type="entry name" value="KOW"/>
    <property type="match status" value="1"/>
</dbReference>
<dbReference type="Pfam" id="PF17136">
    <property type="entry name" value="ribosomal_L24"/>
    <property type="match status" value="1"/>
</dbReference>
<dbReference type="SMART" id="SM00739">
    <property type="entry name" value="KOW"/>
    <property type="match status" value="1"/>
</dbReference>
<dbReference type="SUPFAM" id="SSF50104">
    <property type="entry name" value="Translation proteins SH3-like domain"/>
    <property type="match status" value="1"/>
</dbReference>
<dbReference type="PROSITE" id="PS01108">
    <property type="entry name" value="RIBOSOMAL_L24"/>
    <property type="match status" value="1"/>
</dbReference>
<proteinExistence type="inferred from homology"/>
<feature type="chain" id="PRO_1000142058" description="Large ribosomal subunit protein uL24">
    <location>
        <begin position="1"/>
        <end position="104"/>
    </location>
</feature>
<keyword id="KW-0687">Ribonucleoprotein</keyword>
<keyword id="KW-0689">Ribosomal protein</keyword>
<keyword id="KW-0694">RNA-binding</keyword>
<keyword id="KW-0699">rRNA-binding</keyword>
<comment type="function">
    <text evidence="1">One of two assembly initiator proteins, it binds directly to the 5'-end of the 23S rRNA, where it nucleates assembly of the 50S subunit.</text>
</comment>
<comment type="function">
    <text evidence="1">One of the proteins that surrounds the polypeptide exit tunnel on the outside of the subunit.</text>
</comment>
<comment type="subunit">
    <text evidence="1">Part of the 50S ribosomal subunit.</text>
</comment>
<comment type="similarity">
    <text evidence="1">Belongs to the universal ribosomal protein uL24 family.</text>
</comment>
<evidence type="ECO:0000255" key="1">
    <source>
        <dbReference type="HAMAP-Rule" id="MF_01326"/>
    </source>
</evidence>
<evidence type="ECO:0000305" key="2"/>
<accession>A9R906</accession>